<keyword id="KW-0966">Cell projection</keyword>
<keyword id="KW-0238">DNA-binding</keyword>
<keyword id="KW-0539">Nucleus</keyword>
<keyword id="KW-0597">Phosphoprotein</keyword>
<keyword id="KW-1267">Proteomics identification</keyword>
<keyword id="KW-1185">Reference proteome</keyword>
<keyword id="KW-0678">Repressor</keyword>
<keyword id="KW-0804">Transcription</keyword>
<keyword id="KW-0805">Transcription regulation</keyword>
<comment type="function">
    <text evidence="1 5">Chromatin-binding factor that repress Notch signaling in the absence of Notch intracellular domain by acting as a CBF1 corepressor. Binds to the HEY promoter and might assist, along with NCOR2, RBPJ-mediated repression (PubMed:21475249). Can suppress ATXN1 cytotoxicity in spinocerebellar ataxia type 1 (SCA1). In concert with CIC and ATXN1, involved in brain development (By similarity).</text>
</comment>
<comment type="subunit">
    <text evidence="1 4 5">Homodimer. Interacts with CIC (By similarity). Interacts (via AXH domain) with NCOR2. Interacts with ATXN1 (PubMed:16121196). Directly interacts with RBPJ; this interaction is disrupted in the presence of Notch intracellular domain. Competes with ATXN1 for RBPJ-binding (PubMed:21475249). Found in a complex with CIC and ATXN1 (By similarity).</text>
</comment>
<comment type="interaction">
    <interactant intactId="EBI-8624731">
        <id>P0C7T5</id>
    </interactant>
    <interactant intactId="EBI-727098">
        <id>P21549</id>
        <label>AGXT</label>
    </interactant>
    <organismsDiffer>false</organismsDiffer>
    <experiments>3</experiments>
</comment>
<comment type="interaction">
    <interactant intactId="EBI-8624731">
        <id>P0C7T5</id>
    </interactant>
    <interactant intactId="EBI-948603">
        <id>Q03989</id>
        <label>ARID5A</label>
    </interactant>
    <organismsDiffer>false</organismsDiffer>
    <experiments>3</experiments>
</comment>
<comment type="interaction">
    <interactant intactId="EBI-8624731">
        <id>P0C7T5</id>
    </interactant>
    <interactant intactId="EBI-946029">
        <id>Q6P1W5</id>
        <label>C1orf94</label>
    </interactant>
    <organismsDiffer>false</organismsDiffer>
    <experiments>3</experiments>
</comment>
<comment type="interaction">
    <interactant intactId="EBI-8624731">
        <id>P0C7T5</id>
    </interactant>
    <interactant intactId="EBI-11978259">
        <id>Q92567-2</id>
        <label>FAM168A</label>
    </interactant>
    <organismsDiffer>false</organismsDiffer>
    <experiments>3</experiments>
</comment>
<comment type="interaction">
    <interactant intactId="EBI-8624731">
        <id>P0C7T5</id>
    </interactant>
    <interactant intactId="EBI-10220102">
        <id>B7ZLH0</id>
        <label>FAM22F</label>
    </interactant>
    <organismsDiffer>false</organismsDiffer>
    <experiments>3</experiments>
</comment>
<comment type="interaction">
    <interactant intactId="EBI-8624731">
        <id>P0C7T5</id>
    </interactant>
    <interactant intactId="EBI-1759806">
        <id>O75593</id>
        <label>FOXH1</label>
    </interactant>
    <organismsDiffer>false</organismsDiffer>
    <experiments>6</experiments>
</comment>
<comment type="interaction">
    <interactant intactId="EBI-8624731">
        <id>P0C7T5</id>
    </interactant>
    <interactant intactId="EBI-6678255">
        <id>Q14774</id>
        <label>HLX</label>
    </interactant>
    <organismsDiffer>false</organismsDiffer>
    <experiments>3</experiments>
</comment>
<comment type="interaction">
    <interactant intactId="EBI-8624731">
        <id>P0C7T5</id>
    </interactant>
    <interactant intactId="EBI-1052037">
        <id>Q8IUC1</id>
        <label>KRTAP11-1</label>
    </interactant>
    <organismsDiffer>false</organismsDiffer>
    <experiments>3</experiments>
</comment>
<comment type="interaction">
    <interactant intactId="EBI-8624731">
        <id>P0C7T5</id>
    </interactant>
    <interactant intactId="EBI-10241353">
        <id>Q3SYF9</id>
        <label>KRTAP19-7</label>
    </interactant>
    <organismsDiffer>false</organismsDiffer>
    <experiments>3</experiments>
</comment>
<comment type="interaction">
    <interactant intactId="EBI-8624731">
        <id>P0C7T5</id>
    </interactant>
    <interactant intactId="EBI-18395721">
        <id>Q3LI59</id>
        <label>KRTAP21-2</label>
    </interactant>
    <organismsDiffer>false</organismsDiffer>
    <experiments>3</experiments>
</comment>
<comment type="interaction">
    <interactant intactId="EBI-8624731">
        <id>P0C7T5</id>
    </interactant>
    <interactant intactId="EBI-10261141">
        <id>Q8IUC2</id>
        <label>KRTAP8-1</label>
    </interactant>
    <organismsDiffer>false</organismsDiffer>
    <experiments>3</experiments>
</comment>
<comment type="interaction">
    <interactant intactId="EBI-8624731">
        <id>P0C7T5</id>
    </interactant>
    <interactant intactId="EBI-1052558">
        <id>Q92615</id>
        <label>LARP4B</label>
    </interactant>
    <organismsDiffer>false</organismsDiffer>
    <experiments>3</experiments>
</comment>
<comment type="interaction">
    <interactant intactId="EBI-8624731">
        <id>P0C7T5</id>
    </interactant>
    <interactant intactId="EBI-18582591">
        <id>Q99687-3</id>
        <label>MEIS3</label>
    </interactant>
    <organismsDiffer>false</organismsDiffer>
    <experiments>3</experiments>
</comment>
<comment type="interaction">
    <interactant intactId="EBI-8624731">
        <id>P0C7T5</id>
    </interactant>
    <interactant intactId="EBI-8487781">
        <id>Q8N6F8</id>
        <label>METTL27</label>
    </interactant>
    <organismsDiffer>false</organismsDiffer>
    <experiments>3</experiments>
</comment>
<comment type="interaction">
    <interactant intactId="EBI-8624731">
        <id>P0C7T5</id>
    </interactant>
    <interactant intactId="EBI-5662487">
        <id>Q8TDC0</id>
        <label>MYOZ3</label>
    </interactant>
    <organismsDiffer>false</organismsDiffer>
    <experiments>3</experiments>
</comment>
<comment type="interaction">
    <interactant intactId="EBI-8624731">
        <id>P0C7T5</id>
    </interactant>
    <interactant intactId="EBI-11031437">
        <id>Q13492-3</id>
        <label>PICALM</label>
    </interactant>
    <organismsDiffer>false</organismsDiffer>
    <experiments>3</experiments>
</comment>
<comment type="interaction">
    <interactant intactId="EBI-8624731">
        <id>P0C7T5</id>
    </interactant>
    <interactant intactId="EBI-12123390">
        <id>Q9NWB1-5</id>
        <label>RBFOX1</label>
    </interactant>
    <organismsDiffer>false</organismsDiffer>
    <experiments>3</experiments>
</comment>
<comment type="interaction">
    <interactant intactId="EBI-8624731">
        <id>P0C7T5</id>
    </interactant>
    <interactant intactId="EBI-11963050">
        <id>O43251-10</id>
        <label>RBFOX2</label>
    </interactant>
    <organismsDiffer>false</organismsDiffer>
    <experiments>3</experiments>
</comment>
<comment type="interaction">
    <interactant intactId="EBI-8624731">
        <id>P0C7T5</id>
    </interactant>
    <interactant intactId="EBI-632552">
        <id>Q06330</id>
        <label>RBPJ</label>
    </interactant>
    <organismsDiffer>false</organismsDiffer>
    <experiments>7</experiments>
</comment>
<comment type="interaction">
    <interactant intactId="EBI-8624731">
        <id>P0C7T5</id>
    </interactant>
    <interactant intactId="EBI-11343474">
        <id>Q6UWI4</id>
        <label>SHISA2</label>
    </interactant>
    <organismsDiffer>false</organismsDiffer>
    <experiments>3</experiments>
</comment>
<comment type="interaction">
    <interactant intactId="EBI-8624731">
        <id>P0C7T5</id>
    </interactant>
    <interactant intactId="EBI-743976">
        <id>Q96LM6</id>
        <label>SPMIP9</label>
    </interactant>
    <organismsDiffer>false</organismsDiffer>
    <experiments>3</experiments>
</comment>
<comment type="interaction">
    <interactant intactId="EBI-8624731">
        <id>P0C7T5</id>
    </interactant>
    <interactant intactId="EBI-2853051">
        <id>Q13207</id>
        <label>TBX2</label>
    </interactant>
    <organismsDiffer>false</organismsDiffer>
    <experiments>3</experiments>
</comment>
<comment type="interaction">
    <interactant intactId="EBI-8624731">
        <id>P0C7T5</id>
    </interactant>
    <interactant intactId="EBI-12817837">
        <id>Q9H9P5-5</id>
        <label>UNKL</label>
    </interactant>
    <organismsDiffer>false</organismsDiffer>
    <experiments>3</experiments>
</comment>
<comment type="interaction">
    <interactant intactId="EBI-8624731">
        <id>P0C7T5</id>
    </interactant>
    <interactant intactId="EBI-11975223">
        <id>Q70EL1-9</id>
        <label>USP54</label>
    </interactant>
    <organismsDiffer>false</organismsDiffer>
    <experiments>3</experiments>
</comment>
<comment type="interaction">
    <interactant intactId="EBI-8624731">
        <id>P0C7T5</id>
    </interactant>
    <interactant intactId="EBI-10188476">
        <id>A0A0C4DGF1</id>
        <label>ZBTB32</label>
    </interactant>
    <organismsDiffer>false</organismsDiffer>
    <experiments>3</experiments>
</comment>
<comment type="interaction">
    <interactant intactId="EBI-8624731">
        <id>P0C7T5</id>
    </interactant>
    <interactant intactId="EBI-17234977">
        <id>A0A1U9X8X8</id>
    </interactant>
    <organismsDiffer>false</organismsDiffer>
    <experiments>3</experiments>
</comment>
<comment type="subcellular location">
    <subcellularLocation>
        <location evidence="4">Nucleus</location>
    </subcellularLocation>
    <subcellularLocation>
        <location evidence="4">Cell projection</location>
        <location evidence="4">Dendrite</location>
    </subcellularLocation>
    <text>Forms nuclear foci. Colocalizes with NCOR2 and HDAC3. Distributed beyond the nucleus into the cell body and dendrites in Purkinje cells and in inferior olive cells.</text>
</comment>
<comment type="tissue specificity">
    <text evidence="4">Expressed in cerebellum and cerebral cortex.</text>
</comment>
<comment type="similarity">
    <text evidence="6">Belongs to the ATXN1 family.</text>
</comment>
<sequence length="689" mass="73306">MKPVHERSQECLPPKKRDLPVTSEDMGRTTSCSTNHTPSSDASEWSRGVVVAGQSQAGARVSLGGDGAEAITGLTVDQYGMLYKVAVPPATFSPTGLPSVVNMSPLPPTFNVASSLIQHPGIHYPPLHYAQLPSTSLQFIGSPYSLPYAVPPNFLPSPLLSPSANLATSHLPHFVPYASLLAEGATPPPQAPSPAHSFNKAPSATSPSGQLPHHSSTQPLDLAPGRMPIYYQMSRLPAGYTLHETPPAGASPVLTPQESQSALEAAAANGGQRPRERNLVRRESEALDSPNSKGEGQGLVPVVECVVDGQLFSGSQTPRVEVAAPAHRGTPDTDLEVQRVVGALASQDYRVVAAQRKEEPSPLNLSHHTPDHQGEGRGSARNPAELAEKSQARGFYPQSHQEPVKHRPLPKAMVVANGNLVPTGTDSGLLPVGSEILVASSLDVQARATFPDKEPTPPPITSSHLPSHFMKGAIIQLATGELKRVEDLQTQDFVRSAEVSGGLKIDSSTVVDIQESQWPGFVMLHFVVGEQQSKVSIEVPPEHPFFVYGQGWSSCSPGRTTQLFSLPCHRLQVGDVCISISLQSLNSNSVSQASCAPPSQLGPPRERPERTVLGSRELCDSEGKSQPAGEGSRVVEPSQPESGAQACWPAPSFQRYSMQGEEARAALLRPSFIPQEVKLSIEGRSNAGK</sequence>
<proteinExistence type="evidence at protein level"/>
<evidence type="ECO:0000250" key="1">
    <source>
        <dbReference type="UniProtKB" id="P0C7T6"/>
    </source>
</evidence>
<evidence type="ECO:0000255" key="2">
    <source>
        <dbReference type="PROSITE-ProRule" id="PRU00496"/>
    </source>
</evidence>
<evidence type="ECO:0000256" key="3">
    <source>
        <dbReference type="SAM" id="MobiDB-lite"/>
    </source>
</evidence>
<evidence type="ECO:0000269" key="4">
    <source>
    </source>
</evidence>
<evidence type="ECO:0000269" key="5">
    <source>
    </source>
</evidence>
<evidence type="ECO:0000305" key="6"/>
<evidence type="ECO:0007744" key="7">
    <source>
    </source>
</evidence>
<evidence type="ECO:0007744" key="8">
    <source>
    </source>
</evidence>
<evidence type="ECO:0007744" key="9">
    <source>
    </source>
</evidence>
<reference key="1">
    <citation type="journal article" date="2004" name="Nature">
        <title>The sequence and analysis of duplication-rich human chromosome 16.</title>
        <authorList>
            <person name="Martin J."/>
            <person name="Han C."/>
            <person name="Gordon L.A."/>
            <person name="Terry A."/>
            <person name="Prabhakar S."/>
            <person name="She X."/>
            <person name="Xie G."/>
            <person name="Hellsten U."/>
            <person name="Chan Y.M."/>
            <person name="Altherr M."/>
            <person name="Couronne O."/>
            <person name="Aerts A."/>
            <person name="Bajorek E."/>
            <person name="Black S."/>
            <person name="Blumer H."/>
            <person name="Branscomb E."/>
            <person name="Brown N.C."/>
            <person name="Bruno W.J."/>
            <person name="Buckingham J.M."/>
            <person name="Callen D.F."/>
            <person name="Campbell C.S."/>
            <person name="Campbell M.L."/>
            <person name="Campbell E.W."/>
            <person name="Caoile C."/>
            <person name="Challacombe J.F."/>
            <person name="Chasteen L.A."/>
            <person name="Chertkov O."/>
            <person name="Chi H.C."/>
            <person name="Christensen M."/>
            <person name="Clark L.M."/>
            <person name="Cohn J.D."/>
            <person name="Denys M."/>
            <person name="Detter J.C."/>
            <person name="Dickson M."/>
            <person name="Dimitrijevic-Bussod M."/>
            <person name="Escobar J."/>
            <person name="Fawcett J.J."/>
            <person name="Flowers D."/>
            <person name="Fotopulos D."/>
            <person name="Glavina T."/>
            <person name="Gomez M."/>
            <person name="Gonzales E."/>
            <person name="Goodstein D."/>
            <person name="Goodwin L.A."/>
            <person name="Grady D.L."/>
            <person name="Grigoriev I."/>
            <person name="Groza M."/>
            <person name="Hammon N."/>
            <person name="Hawkins T."/>
            <person name="Haydu L."/>
            <person name="Hildebrand C.E."/>
            <person name="Huang W."/>
            <person name="Israni S."/>
            <person name="Jett J."/>
            <person name="Jewett P.B."/>
            <person name="Kadner K."/>
            <person name="Kimball H."/>
            <person name="Kobayashi A."/>
            <person name="Krawczyk M.-C."/>
            <person name="Leyba T."/>
            <person name="Longmire J.L."/>
            <person name="Lopez F."/>
            <person name="Lou Y."/>
            <person name="Lowry S."/>
            <person name="Ludeman T."/>
            <person name="Manohar C.F."/>
            <person name="Mark G.A."/>
            <person name="McMurray K.L."/>
            <person name="Meincke L.J."/>
            <person name="Morgan J."/>
            <person name="Moyzis R.K."/>
            <person name="Mundt M.O."/>
            <person name="Munk A.C."/>
            <person name="Nandkeshwar R.D."/>
            <person name="Pitluck S."/>
            <person name="Pollard M."/>
            <person name="Predki P."/>
            <person name="Parson-Quintana B."/>
            <person name="Ramirez L."/>
            <person name="Rash S."/>
            <person name="Retterer J."/>
            <person name="Ricke D.O."/>
            <person name="Robinson D.L."/>
            <person name="Rodriguez A."/>
            <person name="Salamov A."/>
            <person name="Saunders E.H."/>
            <person name="Scott D."/>
            <person name="Shough T."/>
            <person name="Stallings R.L."/>
            <person name="Stalvey M."/>
            <person name="Sutherland R.D."/>
            <person name="Tapia R."/>
            <person name="Tesmer J.G."/>
            <person name="Thayer N."/>
            <person name="Thompson L.S."/>
            <person name="Tice H."/>
            <person name="Torney D.C."/>
            <person name="Tran-Gyamfi M."/>
            <person name="Tsai M."/>
            <person name="Ulanovsky L.E."/>
            <person name="Ustaszewska A."/>
            <person name="Vo N."/>
            <person name="White P.S."/>
            <person name="Williams A.L."/>
            <person name="Wills P.L."/>
            <person name="Wu J.-R."/>
            <person name="Wu K."/>
            <person name="Yang J."/>
            <person name="DeJong P."/>
            <person name="Bruce D."/>
            <person name="Doggett N.A."/>
            <person name="Deaven L."/>
            <person name="Schmutz J."/>
            <person name="Grimwood J."/>
            <person name="Richardson P."/>
            <person name="Rokhsar D.S."/>
            <person name="Eichler E.E."/>
            <person name="Gilna P."/>
            <person name="Lucas S.M."/>
            <person name="Myers R.M."/>
            <person name="Rubin E.M."/>
            <person name="Pennacchio L.A."/>
        </authorList>
    </citation>
    <scope>NUCLEOTIDE SEQUENCE [LARGE SCALE GENOMIC DNA]</scope>
</reference>
<reference key="2">
    <citation type="journal article" date="2005" name="EMBO J.">
        <title>Boat, an AXH domain protein, suppresses the cytotoxicity of mutant ataxin-1.</title>
        <authorList>
            <person name="Mizutani A."/>
            <person name="Wang L."/>
            <person name="Rajan H."/>
            <person name="Vig P.J.S."/>
            <person name="Alaynick W.A."/>
            <person name="Thaler J.P."/>
            <person name="Tsai C.-C."/>
        </authorList>
    </citation>
    <scope>INTERACTION WITH NCOR2 AND ATXN1</scope>
    <scope>SUBCELLULAR LOCATION</scope>
    <scope>TISSUE SPECIFICITY</scope>
</reference>
<reference key="3">
    <citation type="journal article" date="2008" name="Proc. Natl. Acad. Sci. U.S.A.">
        <title>A quantitative atlas of mitotic phosphorylation.</title>
        <authorList>
            <person name="Dephoure N."/>
            <person name="Zhou C."/>
            <person name="Villen J."/>
            <person name="Beausoleil S.A."/>
            <person name="Bakalarski C.E."/>
            <person name="Elledge S.J."/>
            <person name="Gygi S.P."/>
        </authorList>
    </citation>
    <scope>IDENTIFICATION BY MASS SPECTROMETRY [LARGE SCALE ANALYSIS]</scope>
    <source>
        <tissue>Cervix carcinoma</tissue>
    </source>
</reference>
<reference key="4">
    <citation type="journal article" date="2010" name="Sci. Signal.">
        <title>Quantitative phosphoproteomics reveals widespread full phosphorylation site occupancy during mitosis.</title>
        <authorList>
            <person name="Olsen J.V."/>
            <person name="Vermeulen M."/>
            <person name="Santamaria A."/>
            <person name="Kumar C."/>
            <person name="Miller M.L."/>
            <person name="Jensen L.J."/>
            <person name="Gnad F."/>
            <person name="Cox J."/>
            <person name="Jensen T.S."/>
            <person name="Nigg E.A."/>
            <person name="Brunak S."/>
            <person name="Mann M."/>
        </authorList>
    </citation>
    <scope>PHOSPHORYLATION [LARGE SCALE ANALYSIS] AT SER-284</scope>
    <scope>IDENTIFICATION BY MASS SPECTROMETRY [LARGE SCALE ANALYSIS]</scope>
    <source>
        <tissue>Cervix carcinoma</tissue>
    </source>
</reference>
<reference key="5">
    <citation type="journal article" date="2011" name="EMBO Rep.">
        <title>Ataxin-1 and Brother of ataxin-1 are components of the Notch signalling pathway.</title>
        <authorList>
            <person name="Tong X."/>
            <person name="Gui H."/>
            <person name="Jin F."/>
            <person name="Heck B.W."/>
            <person name="Lin P."/>
            <person name="Ma J."/>
            <person name="Fondell J.D."/>
            <person name="Tsai C.C."/>
        </authorList>
    </citation>
    <scope>FUNCTION</scope>
    <scope>INTERACTION WITH RBPJ</scope>
</reference>
<reference key="6">
    <citation type="journal article" date="2013" name="J. Proteome Res.">
        <title>Toward a comprehensive characterization of a human cancer cell phosphoproteome.</title>
        <authorList>
            <person name="Zhou H."/>
            <person name="Di Palma S."/>
            <person name="Preisinger C."/>
            <person name="Peng M."/>
            <person name="Polat A.N."/>
            <person name="Heck A.J."/>
            <person name="Mohammed S."/>
        </authorList>
    </citation>
    <scope>PHOSPHORYLATION [LARGE SCALE ANALYSIS] AT THR-330; SER-361 AND SER-615</scope>
    <scope>IDENTIFICATION BY MASS SPECTROMETRY [LARGE SCALE ANALYSIS]</scope>
    <source>
        <tissue>Cervix carcinoma</tissue>
        <tissue>Erythroleukemia</tissue>
    </source>
</reference>
<reference key="7">
    <citation type="journal article" date="2014" name="J. Proteomics">
        <title>An enzyme assisted RP-RPLC approach for in-depth analysis of human liver phosphoproteome.</title>
        <authorList>
            <person name="Bian Y."/>
            <person name="Song C."/>
            <person name="Cheng K."/>
            <person name="Dong M."/>
            <person name="Wang F."/>
            <person name="Huang J."/>
            <person name="Sun D."/>
            <person name="Wang L."/>
            <person name="Ye M."/>
            <person name="Zou H."/>
        </authorList>
    </citation>
    <scope>PHOSPHORYLATION [LARGE SCALE ANALYSIS] AT SER-361</scope>
    <scope>IDENTIFICATION BY MASS SPECTROMETRY [LARGE SCALE ANALYSIS]</scope>
    <source>
        <tissue>Liver</tissue>
    </source>
</reference>
<name>ATX1L_HUMAN</name>
<dbReference type="EMBL" id="AC010653">
    <property type="status" value="NOT_ANNOTATED_CDS"/>
    <property type="molecule type" value="Genomic_DNA"/>
</dbReference>
<dbReference type="EMBL" id="BX537575">
    <property type="status" value="NOT_ANNOTATED_CDS"/>
    <property type="molecule type" value="mRNA"/>
</dbReference>
<dbReference type="CCDS" id="CCDS45523.1"/>
<dbReference type="RefSeq" id="NP_001131147.1">
    <property type="nucleotide sequence ID" value="NM_001137675.4"/>
</dbReference>
<dbReference type="SMR" id="P0C7T5"/>
<dbReference type="BioGRID" id="131172">
    <property type="interactions" value="156"/>
</dbReference>
<dbReference type="FunCoup" id="P0C7T5">
    <property type="interactions" value="3350"/>
</dbReference>
<dbReference type="IntAct" id="P0C7T5">
    <property type="interactions" value="75"/>
</dbReference>
<dbReference type="MINT" id="P0C7T5"/>
<dbReference type="STRING" id="9606.ENSP00000415822"/>
<dbReference type="GlyCosmos" id="P0C7T5">
    <property type="glycosylation" value="5 sites, 1 glycan"/>
</dbReference>
<dbReference type="GlyGen" id="P0C7T5">
    <property type="glycosylation" value="15 sites, 1 O-linked glycan (13 sites)"/>
</dbReference>
<dbReference type="iPTMnet" id="P0C7T5"/>
<dbReference type="PhosphoSitePlus" id="P0C7T5"/>
<dbReference type="BioMuta" id="ATXN1L"/>
<dbReference type="DMDM" id="206557834"/>
<dbReference type="jPOST" id="P0C7T5"/>
<dbReference type="MassIVE" id="P0C7T5"/>
<dbReference type="PaxDb" id="9606-ENSP00000415822"/>
<dbReference type="PeptideAtlas" id="P0C7T5"/>
<dbReference type="ProteomicsDB" id="52365"/>
<dbReference type="Pumba" id="P0C7T5"/>
<dbReference type="Antibodypedia" id="67440">
    <property type="antibodies" value="85 antibodies from 13 providers"/>
</dbReference>
<dbReference type="DNASU" id="342371"/>
<dbReference type="Ensembl" id="ENST00000427980.7">
    <property type="protein sequence ID" value="ENSP00000415822.2"/>
    <property type="gene ID" value="ENSG00000224470.9"/>
</dbReference>
<dbReference type="Ensembl" id="ENST00000683775.1">
    <property type="protein sequence ID" value="ENSP00000507897.1"/>
    <property type="gene ID" value="ENSG00000224470.9"/>
</dbReference>
<dbReference type="GeneID" id="342371"/>
<dbReference type="KEGG" id="hsa:342371"/>
<dbReference type="MANE-Select" id="ENST00000427980.7">
    <property type="protein sequence ID" value="ENSP00000415822.2"/>
    <property type="RefSeq nucleotide sequence ID" value="NM_001137675.4"/>
    <property type="RefSeq protein sequence ID" value="NP_001131147.1"/>
</dbReference>
<dbReference type="UCSC" id="uc002fbd.3">
    <property type="organism name" value="human"/>
</dbReference>
<dbReference type="AGR" id="HGNC:33279"/>
<dbReference type="CTD" id="342371"/>
<dbReference type="DisGeNET" id="342371"/>
<dbReference type="GeneCards" id="ATXN1L"/>
<dbReference type="HGNC" id="HGNC:33279">
    <property type="gene designation" value="ATXN1L"/>
</dbReference>
<dbReference type="HPA" id="ENSG00000224470">
    <property type="expression patterns" value="Low tissue specificity"/>
</dbReference>
<dbReference type="MIM" id="614301">
    <property type="type" value="gene"/>
</dbReference>
<dbReference type="neXtProt" id="NX_P0C7T5"/>
<dbReference type="OpenTargets" id="ENSG00000224470"/>
<dbReference type="PharmGKB" id="PA162377321"/>
<dbReference type="VEuPathDB" id="HostDB:ENSG00000224470"/>
<dbReference type="eggNOG" id="KOG4053">
    <property type="taxonomic scope" value="Eukaryota"/>
</dbReference>
<dbReference type="GeneTree" id="ENSGT00390000005939"/>
<dbReference type="HOGENOM" id="CLU_434497_0_0_1"/>
<dbReference type="InParanoid" id="P0C7T5"/>
<dbReference type="OMA" id="WAGPSFQ"/>
<dbReference type="OrthoDB" id="10000452at2759"/>
<dbReference type="PAN-GO" id="P0C7T5">
    <property type="GO annotations" value="3 GO annotations based on evolutionary models"/>
</dbReference>
<dbReference type="PhylomeDB" id="P0C7T5"/>
<dbReference type="TreeFam" id="TF350643"/>
<dbReference type="PathwayCommons" id="P0C7T5"/>
<dbReference type="SignaLink" id="P0C7T5"/>
<dbReference type="BioGRID-ORCS" id="342371">
    <property type="hits" value="19 hits in 1162 CRISPR screens"/>
</dbReference>
<dbReference type="ChiTaRS" id="ATXN1L">
    <property type="organism name" value="human"/>
</dbReference>
<dbReference type="GenomeRNAi" id="342371"/>
<dbReference type="Pharos" id="P0C7T5">
    <property type="development level" value="Tbio"/>
</dbReference>
<dbReference type="PRO" id="PR:P0C7T5"/>
<dbReference type="Proteomes" id="UP000005640">
    <property type="component" value="Chromosome 16"/>
</dbReference>
<dbReference type="RNAct" id="P0C7T5">
    <property type="molecule type" value="protein"/>
</dbReference>
<dbReference type="Bgee" id="ENSG00000224470">
    <property type="expression patterns" value="Expressed in endothelial cell and 195 other cell types or tissues"/>
</dbReference>
<dbReference type="GO" id="GO:0030425">
    <property type="term" value="C:dendrite"/>
    <property type="evidence" value="ECO:0007669"/>
    <property type="project" value="UniProtKB-SubCell"/>
</dbReference>
<dbReference type="GO" id="GO:0005730">
    <property type="term" value="C:nucleolus"/>
    <property type="evidence" value="ECO:0000314"/>
    <property type="project" value="HPA"/>
</dbReference>
<dbReference type="GO" id="GO:0005654">
    <property type="term" value="C:nucleoplasm"/>
    <property type="evidence" value="ECO:0000314"/>
    <property type="project" value="HPA"/>
</dbReference>
<dbReference type="GO" id="GO:0005634">
    <property type="term" value="C:nucleus"/>
    <property type="evidence" value="ECO:0000318"/>
    <property type="project" value="GO_Central"/>
</dbReference>
<dbReference type="GO" id="GO:0003682">
    <property type="term" value="F:chromatin binding"/>
    <property type="evidence" value="ECO:0000318"/>
    <property type="project" value="GO_Central"/>
</dbReference>
<dbReference type="GO" id="GO:0003677">
    <property type="term" value="F:DNA binding"/>
    <property type="evidence" value="ECO:0007669"/>
    <property type="project" value="UniProtKB-KW"/>
</dbReference>
<dbReference type="GO" id="GO:0031208">
    <property type="term" value="F:POZ domain binding"/>
    <property type="evidence" value="ECO:0007669"/>
    <property type="project" value="Ensembl"/>
</dbReference>
<dbReference type="GO" id="GO:0003723">
    <property type="term" value="F:RNA binding"/>
    <property type="evidence" value="ECO:0000318"/>
    <property type="project" value="GO_Central"/>
</dbReference>
<dbReference type="GO" id="GO:0007420">
    <property type="term" value="P:brain development"/>
    <property type="evidence" value="ECO:0000318"/>
    <property type="project" value="GO_Central"/>
</dbReference>
<dbReference type="GO" id="GO:0030198">
    <property type="term" value="P:extracellular matrix organization"/>
    <property type="evidence" value="ECO:0007669"/>
    <property type="project" value="Ensembl"/>
</dbReference>
<dbReference type="GO" id="GO:0007612">
    <property type="term" value="P:learning"/>
    <property type="evidence" value="ECO:0000250"/>
    <property type="project" value="UniProtKB"/>
</dbReference>
<dbReference type="GO" id="GO:0048286">
    <property type="term" value="P:lung alveolus development"/>
    <property type="evidence" value="ECO:0007669"/>
    <property type="project" value="Ensembl"/>
</dbReference>
<dbReference type="GO" id="GO:0007613">
    <property type="term" value="P:memory"/>
    <property type="evidence" value="ECO:0000250"/>
    <property type="project" value="UniProtKB"/>
</dbReference>
<dbReference type="GO" id="GO:0000122">
    <property type="term" value="P:negative regulation of transcription by RNA polymerase II"/>
    <property type="evidence" value="ECO:0000318"/>
    <property type="project" value="GO_Central"/>
</dbReference>
<dbReference type="GO" id="GO:1902035">
    <property type="term" value="P:positive regulation of hematopoietic stem cell proliferation"/>
    <property type="evidence" value="ECO:0007669"/>
    <property type="project" value="Ensembl"/>
</dbReference>
<dbReference type="GO" id="GO:0035176">
    <property type="term" value="P:social behavior"/>
    <property type="evidence" value="ECO:0000250"/>
    <property type="project" value="UniProtKB"/>
</dbReference>
<dbReference type="GO" id="GO:0006366">
    <property type="term" value="P:transcription by RNA polymerase II"/>
    <property type="evidence" value="ECO:0007669"/>
    <property type="project" value="Ensembl"/>
</dbReference>
<dbReference type="Gene3D" id="2.170.16.10">
    <property type="entry name" value="Hedgehog/Intein (Hint) domain"/>
    <property type="match status" value="1"/>
</dbReference>
<dbReference type="InterPro" id="IPR020997">
    <property type="entry name" value="Ataxin-1_N"/>
</dbReference>
<dbReference type="InterPro" id="IPR043404">
    <property type="entry name" value="ATAXIN1-like"/>
</dbReference>
<dbReference type="InterPro" id="IPR003652">
    <property type="entry name" value="Ataxin_AXH_dom"/>
</dbReference>
<dbReference type="InterPro" id="IPR036096">
    <property type="entry name" value="Ataxin_AXH_dom_sf"/>
</dbReference>
<dbReference type="PANTHER" id="PTHR13392">
    <property type="entry name" value="ATAXIN 1"/>
    <property type="match status" value="1"/>
</dbReference>
<dbReference type="PANTHER" id="PTHR13392:SF6">
    <property type="entry name" value="ATAXIN-1-LIKE"/>
    <property type="match status" value="1"/>
</dbReference>
<dbReference type="Pfam" id="PF12547">
    <property type="entry name" value="ATXN-1_C"/>
    <property type="match status" value="1"/>
</dbReference>
<dbReference type="Pfam" id="PF08517">
    <property type="entry name" value="AXH"/>
    <property type="match status" value="1"/>
</dbReference>
<dbReference type="SMART" id="SM00536">
    <property type="entry name" value="AXH"/>
    <property type="match status" value="1"/>
</dbReference>
<dbReference type="SUPFAM" id="SSF102031">
    <property type="entry name" value="AXH domain"/>
    <property type="match status" value="1"/>
</dbReference>
<dbReference type="PROSITE" id="PS51148">
    <property type="entry name" value="AXH"/>
    <property type="match status" value="1"/>
</dbReference>
<feature type="chain" id="PRO_0000343709" description="Ataxin-1-like">
    <location>
        <begin position="1"/>
        <end position="689"/>
    </location>
</feature>
<feature type="domain" description="AXH" evidence="2">
    <location>
        <begin position="457"/>
        <end position="588"/>
    </location>
</feature>
<feature type="region of interest" description="Disordered" evidence="3">
    <location>
        <begin position="1"/>
        <end position="46"/>
    </location>
</feature>
<feature type="region of interest" description="Interaction with NCOR2 and ATXN1" evidence="4">
    <location>
        <begin position="20"/>
        <end position="197"/>
    </location>
</feature>
<feature type="region of interest" description="Self-association">
    <location>
        <begin position="20"/>
        <end position="197"/>
    </location>
</feature>
<feature type="region of interest" description="Disordered" evidence="3">
    <location>
        <begin position="185"/>
        <end position="223"/>
    </location>
</feature>
<feature type="region of interest" description="Disordered" evidence="3">
    <location>
        <begin position="242"/>
        <end position="297"/>
    </location>
</feature>
<feature type="region of interest" description="Disordered" evidence="3">
    <location>
        <begin position="357"/>
        <end position="405"/>
    </location>
</feature>
<feature type="region of interest" description="Disordered" evidence="3">
    <location>
        <begin position="617"/>
        <end position="647"/>
    </location>
</feature>
<feature type="compositionally biased region" description="Basic and acidic residues" evidence="3">
    <location>
        <begin position="1"/>
        <end position="19"/>
    </location>
</feature>
<feature type="compositionally biased region" description="Polar residues" evidence="3">
    <location>
        <begin position="28"/>
        <end position="43"/>
    </location>
</feature>
<feature type="compositionally biased region" description="Polar residues" evidence="3">
    <location>
        <begin position="200"/>
        <end position="219"/>
    </location>
</feature>
<feature type="compositionally biased region" description="Low complexity" evidence="3">
    <location>
        <begin position="257"/>
        <end position="268"/>
    </location>
</feature>
<feature type="compositionally biased region" description="Basic and acidic residues" evidence="3">
    <location>
        <begin position="273"/>
        <end position="285"/>
    </location>
</feature>
<feature type="modified residue" description="Phosphoserine" evidence="7">
    <location>
        <position position="284"/>
    </location>
</feature>
<feature type="modified residue" description="Phosphothreonine" evidence="8">
    <location>
        <position position="330"/>
    </location>
</feature>
<feature type="modified residue" description="Phosphoserine" evidence="8 9">
    <location>
        <position position="361"/>
    </location>
</feature>
<feature type="modified residue" description="Phosphoserine" evidence="8">
    <location>
        <position position="615"/>
    </location>
</feature>
<feature type="sequence variant" id="VAR_044496" description="In dbSNP:rs7194407.">
    <original>S</original>
    <variation>P</variation>
    <location>
        <position position="313"/>
    </location>
</feature>
<organism>
    <name type="scientific">Homo sapiens</name>
    <name type="common">Human</name>
    <dbReference type="NCBI Taxonomy" id="9606"/>
    <lineage>
        <taxon>Eukaryota</taxon>
        <taxon>Metazoa</taxon>
        <taxon>Chordata</taxon>
        <taxon>Craniata</taxon>
        <taxon>Vertebrata</taxon>
        <taxon>Euteleostomi</taxon>
        <taxon>Mammalia</taxon>
        <taxon>Eutheria</taxon>
        <taxon>Euarchontoglires</taxon>
        <taxon>Primates</taxon>
        <taxon>Haplorrhini</taxon>
        <taxon>Catarrhini</taxon>
        <taxon>Hominidae</taxon>
        <taxon>Homo</taxon>
    </lineage>
</organism>
<accession>P0C7T5</accession>
<gene>
    <name type="primary">ATXN1L</name>
    <name type="synonym">BOAT</name>
    <name type="synonym">BOAT1</name>
</gene>
<protein>
    <recommendedName>
        <fullName>Ataxin-1-like</fullName>
    </recommendedName>
    <alternativeName>
        <fullName>Brother of ataxin-1</fullName>
        <shortName>Brother of ATXN1</shortName>
    </alternativeName>
</protein>